<accession>O25751</accession>
<accession>Q9RNF5</accession>
<gene>
    <name evidence="1" type="primary">tolB</name>
    <name type="ordered locus">HP_1126</name>
</gene>
<name>TOLB_HELPY</name>
<proteinExistence type="inferred from homology"/>
<keyword id="KW-0131">Cell cycle</keyword>
<keyword id="KW-0132">Cell division</keyword>
<keyword id="KW-0574">Periplasm</keyword>
<keyword id="KW-1185">Reference proteome</keyword>
<keyword id="KW-0732">Signal</keyword>
<protein>
    <recommendedName>
        <fullName evidence="1">Tol-Pal system protein TolB</fullName>
    </recommendedName>
</protein>
<organism>
    <name type="scientific">Helicobacter pylori (strain ATCC 700392 / 26695)</name>
    <name type="common">Campylobacter pylori</name>
    <dbReference type="NCBI Taxonomy" id="85962"/>
    <lineage>
        <taxon>Bacteria</taxon>
        <taxon>Pseudomonadati</taxon>
        <taxon>Campylobacterota</taxon>
        <taxon>Epsilonproteobacteria</taxon>
        <taxon>Campylobacterales</taxon>
        <taxon>Helicobacteraceae</taxon>
        <taxon>Helicobacter</taxon>
    </lineage>
</organism>
<dbReference type="EMBL" id="AE000511">
    <property type="protein sequence ID" value="AAD08170.1"/>
    <property type="molecule type" value="Genomic_DNA"/>
</dbReference>
<dbReference type="EMBL" id="AF181881">
    <property type="protein sequence ID" value="AAF04275.1"/>
    <property type="molecule type" value="Genomic_DNA"/>
</dbReference>
<dbReference type="PIR" id="F64660">
    <property type="entry name" value="F64660"/>
</dbReference>
<dbReference type="RefSeq" id="NP_207917.1">
    <property type="nucleotide sequence ID" value="NC_000915.1"/>
</dbReference>
<dbReference type="RefSeq" id="WP_001269995.1">
    <property type="nucleotide sequence ID" value="NC_018939.1"/>
</dbReference>
<dbReference type="SMR" id="O25751"/>
<dbReference type="STRING" id="85962.HP_1126"/>
<dbReference type="PaxDb" id="85962-C694_05815"/>
<dbReference type="EnsemblBacteria" id="AAD08170">
    <property type="protein sequence ID" value="AAD08170"/>
    <property type="gene ID" value="HP_1126"/>
</dbReference>
<dbReference type="KEGG" id="heo:C694_05815"/>
<dbReference type="KEGG" id="hpy:HP_1126"/>
<dbReference type="PATRIC" id="fig|85962.47.peg.1209"/>
<dbReference type="eggNOG" id="COG0823">
    <property type="taxonomic scope" value="Bacteria"/>
</dbReference>
<dbReference type="InParanoid" id="O25751"/>
<dbReference type="OrthoDB" id="9815657at2"/>
<dbReference type="PhylomeDB" id="O25751"/>
<dbReference type="Proteomes" id="UP000000429">
    <property type="component" value="Chromosome"/>
</dbReference>
<dbReference type="GO" id="GO:0042597">
    <property type="term" value="C:periplasmic space"/>
    <property type="evidence" value="ECO:0007669"/>
    <property type="project" value="UniProtKB-SubCell"/>
</dbReference>
<dbReference type="GO" id="GO:0051301">
    <property type="term" value="P:cell division"/>
    <property type="evidence" value="ECO:0007669"/>
    <property type="project" value="UniProtKB-KW"/>
</dbReference>
<dbReference type="GO" id="GO:0017038">
    <property type="term" value="P:protein import"/>
    <property type="evidence" value="ECO:0007669"/>
    <property type="project" value="InterPro"/>
</dbReference>
<dbReference type="Gene3D" id="2.120.10.30">
    <property type="entry name" value="TolB, C-terminal domain"/>
    <property type="match status" value="1"/>
</dbReference>
<dbReference type="Gene3D" id="3.40.50.10070">
    <property type="entry name" value="TolB, N-terminal domain"/>
    <property type="match status" value="1"/>
</dbReference>
<dbReference type="HAMAP" id="MF_00671">
    <property type="entry name" value="TolB"/>
    <property type="match status" value="1"/>
</dbReference>
<dbReference type="InterPro" id="IPR011042">
    <property type="entry name" value="6-blade_b-propeller_TolB-like"/>
</dbReference>
<dbReference type="InterPro" id="IPR011659">
    <property type="entry name" value="PD40"/>
</dbReference>
<dbReference type="InterPro" id="IPR014167">
    <property type="entry name" value="Tol-Pal_TolB"/>
</dbReference>
<dbReference type="NCBIfam" id="NF003124">
    <property type="entry name" value="PRK04043.1"/>
    <property type="match status" value="1"/>
</dbReference>
<dbReference type="PANTHER" id="PTHR36842:SF1">
    <property type="entry name" value="PROTEIN TOLB"/>
    <property type="match status" value="1"/>
</dbReference>
<dbReference type="PANTHER" id="PTHR36842">
    <property type="entry name" value="PROTEIN TOLB HOMOLOG"/>
    <property type="match status" value="1"/>
</dbReference>
<dbReference type="Pfam" id="PF07676">
    <property type="entry name" value="PD40"/>
    <property type="match status" value="1"/>
</dbReference>
<dbReference type="SUPFAM" id="SSF52964">
    <property type="entry name" value="TolB, N-terminal domain"/>
    <property type="match status" value="1"/>
</dbReference>
<dbReference type="SUPFAM" id="SSF69304">
    <property type="entry name" value="Tricorn protease N-terminal domain"/>
    <property type="match status" value="1"/>
</dbReference>
<comment type="function">
    <text evidence="1">Part of the Tol-Pal system, which plays a role in outer membrane invagination during cell division and is important for maintaining outer membrane integrity.</text>
</comment>
<comment type="subunit">
    <text evidence="1">The Tol-Pal system is composed of five core proteins: the inner membrane proteins TolA, TolQ and TolR, the periplasmic protein TolB and the outer membrane protein Pal. They form a network linking the inner and outer membranes and the peptidoglycan layer.</text>
</comment>
<comment type="subcellular location">
    <subcellularLocation>
        <location evidence="1">Periplasm</location>
    </subcellularLocation>
</comment>
<comment type="similarity">
    <text evidence="1">Belongs to the TolB family.</text>
</comment>
<evidence type="ECO:0000255" key="1">
    <source>
        <dbReference type="HAMAP-Rule" id="MF_00671"/>
    </source>
</evidence>
<evidence type="ECO:0000305" key="2"/>
<reference key="1">
    <citation type="journal article" date="1997" name="Nature">
        <title>The complete genome sequence of the gastric pathogen Helicobacter pylori.</title>
        <authorList>
            <person name="Tomb J.-F."/>
            <person name="White O."/>
            <person name="Kerlavage A.R."/>
            <person name="Clayton R.A."/>
            <person name="Sutton G.G."/>
            <person name="Fleischmann R.D."/>
            <person name="Ketchum K.A."/>
            <person name="Klenk H.-P."/>
            <person name="Gill S.R."/>
            <person name="Dougherty B.A."/>
            <person name="Nelson K.E."/>
            <person name="Quackenbush J."/>
            <person name="Zhou L."/>
            <person name="Kirkness E.F."/>
            <person name="Peterson S.N."/>
            <person name="Loftus B.J."/>
            <person name="Richardson D.L."/>
            <person name="Dodson R.J."/>
            <person name="Khalak H.G."/>
            <person name="Glodek A."/>
            <person name="McKenney K."/>
            <person name="FitzGerald L.M."/>
            <person name="Lee N."/>
            <person name="Adams M.D."/>
            <person name="Hickey E.K."/>
            <person name="Berg D.E."/>
            <person name="Gocayne J.D."/>
            <person name="Utterback T.R."/>
            <person name="Peterson J.D."/>
            <person name="Kelley J.M."/>
            <person name="Cotton M.D."/>
            <person name="Weidman J.F."/>
            <person name="Fujii C."/>
            <person name="Bowman C."/>
            <person name="Watthey L."/>
            <person name="Wallin E."/>
            <person name="Hayes W.S."/>
            <person name="Borodovsky M."/>
            <person name="Karp P.D."/>
            <person name="Smith H.O."/>
            <person name="Fraser C.M."/>
            <person name="Venter J.C."/>
        </authorList>
    </citation>
    <scope>NUCLEOTIDE SEQUENCE [LARGE SCALE GENOMIC DNA]</scope>
    <source>
        <strain>ATCC 700392 / 26695</strain>
    </source>
</reference>
<reference key="2">
    <citation type="submission" date="1999-08" db="EMBL/GenBank/DDBJ databases">
        <title>Identification of Helicobacter pylori antigens.</title>
        <authorList>
            <person name="Kolesnikow T."/>
            <person name="Gekas S."/>
            <person name="Lee A."/>
        </authorList>
    </citation>
    <scope>NUCLEOTIDE SEQUENCE [GENOMIC DNA]</scope>
    <source>
        <strain>RU-1</strain>
    </source>
</reference>
<sequence>MRYLWLFLIHTIGLFATDKTLDIIKTIQKLPKIEVRYSIDNDANYALKLHEVLANDLKTSQHFDVSQNKDQGAINYAELKDKKVHLVALVSVAVENGNKISRLKLYDVDTGTLKKTFDYPIVSLDLYPFAAHNMAIVVNDYLKAPSIAWMKRLIVFSKYIGPGITNIALADYTMRYQKEIIKNNRLNIFPKWANAEQTEFYYTQYGERTPMILKYNIQKATHENIASSQGMAVVSSVSSDGSKILMSLAPDGQPDVYLYDTHKKTKTKITRYPGIDVSGVFLEDDKSMAFVSDRSGYPNIYMKKLGLKESAEQLLYEGRSNESIDAYKDSIVYVSRENLNEFGKTVFNLNLITLNSKYIRRLTVNGSNQMPRFSTDGRNIMYIKKTPQEYAMGLILLDYNQSFLFPLKNVKIQAFDW</sequence>
<feature type="signal peptide" evidence="1">
    <location>
        <begin position="1"/>
        <end position="16"/>
    </location>
</feature>
<feature type="chain" id="PRO_0000034658" description="Tol-Pal system protein TolB" evidence="1">
    <location>
        <begin position="17"/>
        <end position="417"/>
    </location>
</feature>
<feature type="sequence conflict" description="In Ref. 2; AAF04275." evidence="2" ref="2">
    <original>H</original>
    <variation>C</variation>
    <location>
        <position position="10"/>
    </location>
</feature>
<feature type="sequence conflict" description="In Ref. 2; AAF04275." evidence="2" ref="2">
    <original>K</original>
    <variation>R</variation>
    <location>
        <position position="58"/>
    </location>
</feature>
<feature type="sequence conflict" description="In Ref. 2; AAF04275." evidence="2" ref="2">
    <original>DTGTLK</original>
    <variation>NTSALV</variation>
    <location>
        <begin position="109"/>
        <end position="114"/>
    </location>
</feature>
<feature type="sequence conflict" description="In Ref. 2; AAF04275." evidence="2" ref="2">
    <original>VSL</original>
    <variation>LSA</variation>
    <location>
        <begin position="122"/>
        <end position="124"/>
    </location>
</feature>
<feature type="sequence conflict" description="In Ref. 2; AAF04275." evidence="2" ref="2">
    <original>T</original>
    <variation>A</variation>
    <location>
        <position position="353"/>
    </location>
</feature>
<feature type="sequence conflict" description="In Ref. 2; AAF04275." evidence="2" ref="2">
    <original>P</original>
    <variation>S</variation>
    <location>
        <position position="387"/>
    </location>
</feature>